<proteinExistence type="evidence at transcript level"/>
<reference key="1">
    <citation type="journal article" date="2001" name="Am. J. Hum. Genet.">
        <title>Two genes that map to the STSL locus cause sitosterolemia: genomic structure and spectrum of mutations involving sterolin-1 and sterolin-2, encoded by ABCG5 and ABCG8, respectively.</title>
        <authorList>
            <person name="Lu K."/>
            <person name="Lee M.-H."/>
            <person name="Hazard S."/>
            <person name="Brooks-Wilson A."/>
            <person name="Hidaka H."/>
            <person name="Kojima H."/>
            <person name="Ose L."/>
            <person name="Stalenhoef A.F.H."/>
            <person name="Mietinnen T."/>
            <person name="Bjorkhem I."/>
            <person name="Bruckert E."/>
            <person name="Pandya A."/>
            <person name="Brewer H.B. Jr."/>
            <person name="Salen G."/>
            <person name="Dean M."/>
            <person name="Srivastava A.K."/>
            <person name="Patel S.B."/>
        </authorList>
    </citation>
    <scope>NUCLEOTIDE SEQUENCE [MRNA] (ISOFORMS 1 AND 2)</scope>
    <source>
        <strain>Sprague-Dawley</strain>
    </source>
</reference>
<reference key="2">
    <citation type="submission" date="2002-08" db="EMBL/GenBank/DDBJ databases">
        <authorList>
            <person name="Lu K."/>
            <person name="Yu H."/>
            <person name="Lee M.-H."/>
            <person name="Patel S.B."/>
        </authorList>
    </citation>
    <scope>SEQUENCE REVISION TO 3-4</scope>
</reference>
<reference key="3">
    <citation type="journal article" date="2003" name="BMC Cardiovasc. Disord.">
        <title>The rat STSL locus: characterization, chromosomal assignment, and genetic variations in sitosterolemic hypertensive rats.</title>
        <authorList>
            <person name="Yu H."/>
            <person name="Pandit B."/>
            <person name="Klett E."/>
            <person name="Lee M.-H."/>
            <person name="Lu K."/>
            <person name="Helou K."/>
            <person name="Ikeda I."/>
            <person name="Egashira N."/>
            <person name="Sato M."/>
            <person name="Klein R."/>
            <person name="Batta A."/>
            <person name="Salen G."/>
            <person name="Patel S.B."/>
        </authorList>
    </citation>
    <scope>NUCLEOTIDE SEQUENCE [GENOMIC DNA] (ISOFORMS 1 AND 3)</scope>
    <scope>TISSUE SPECIFICITY</scope>
    <source>
        <strain>GH</strain>
        <strain>SHR</strain>
        <strain>SHRSP</strain>
        <strain>Sprague-Dawley</strain>
        <strain>Wistar</strain>
        <strain>Wistar Kyoto</strain>
        <strain>WKA</strain>
        <tissue>Intestine</tissue>
        <tissue>Liver</tissue>
    </source>
</reference>
<comment type="function">
    <text evidence="2">ABCG5 and ABCG8 form an obligate heterodimer that mediates Mg(2+)- and ATP-dependent sterol transport across the cell membrane. Plays an essential role in the selective transport of the dietary cholesterol in and out of the enterocytes and in the selective sterol excretion by the liver into bile. Required for normal sterol homeostasis. The heterodimer with ABCG5 has ATPase activity.</text>
</comment>
<comment type="catalytic activity">
    <reaction evidence="1">
        <text>cholesterol(in) + ATP + H2O = cholesterol(out) + ADP + phosphate + H(+)</text>
        <dbReference type="Rhea" id="RHEA:39051"/>
        <dbReference type="ChEBI" id="CHEBI:15377"/>
        <dbReference type="ChEBI" id="CHEBI:15378"/>
        <dbReference type="ChEBI" id="CHEBI:16113"/>
        <dbReference type="ChEBI" id="CHEBI:30616"/>
        <dbReference type="ChEBI" id="CHEBI:43474"/>
        <dbReference type="ChEBI" id="CHEBI:456216"/>
    </reaction>
</comment>
<comment type="catalytic activity">
    <reaction evidence="1">
        <text>sitosterol(in) + ATP + H2O = sitosterol(out) + ADP + phosphate + H(+)</text>
        <dbReference type="Rhea" id="RHEA:39103"/>
        <dbReference type="ChEBI" id="CHEBI:15377"/>
        <dbReference type="ChEBI" id="CHEBI:15378"/>
        <dbReference type="ChEBI" id="CHEBI:27693"/>
        <dbReference type="ChEBI" id="CHEBI:30616"/>
        <dbReference type="ChEBI" id="CHEBI:43474"/>
        <dbReference type="ChEBI" id="CHEBI:456216"/>
    </reaction>
</comment>
<comment type="cofactor">
    <cofactor evidence="1">
        <name>Mg(2+)</name>
        <dbReference type="ChEBI" id="CHEBI:18420"/>
    </cofactor>
</comment>
<comment type="subunit">
    <text evidence="2">Heterodimer with ABCG8.</text>
</comment>
<comment type="subcellular location">
    <subcellularLocation>
        <location evidence="2">Cell membrane</location>
        <topology evidence="2">Multi-pass membrane protein</topology>
    </subcellularLocation>
    <subcellularLocation>
        <location evidence="2">Apical cell membrane</location>
        <topology evidence="2">Multi-pass membrane protein</topology>
    </subcellularLocation>
</comment>
<comment type="alternative products">
    <event type="alternative splicing"/>
    <isoform>
        <id>P58428-3</id>
        <name>3</name>
        <sequence type="displayed"/>
    </isoform>
    <isoform>
        <id>P58428-1</id>
        <name>1</name>
        <sequence type="described" ref="VSP_008767"/>
    </isoform>
    <isoform>
        <id>P58428-2</id>
        <name>2</name>
        <sequence type="described" ref="VSP_008767 VSP_000054"/>
    </isoform>
</comment>
<comment type="tissue specificity">
    <text evidence="5">Highest expression in liver, with lower levels in small intestine and colon.</text>
</comment>
<comment type="domain">
    <text evidence="1">A functional Walker motif (consensus sequence G-X-X-G-X-G-K-[ST]-T) is expected to bind ATP. The essential Lys in this region is not conserved in ABCG8 (G-S-S-G-C-R-A-S) and is not required for transport activity mediated by the heterodimer with ABCG5.</text>
</comment>
<comment type="PTM">
    <text evidence="1">N-glycosylated. N-glycosylation is important for efficient export out of the endoplasmic reticulum.</text>
</comment>
<comment type="similarity">
    <text evidence="7">Belongs to the ABC transporter superfamily. ABCG family. Eye pigment precursor importer (TC 3.A.1.204) subfamily.</text>
</comment>
<comment type="caution">
    <text evidence="7">Seems to have a defective ATP-binding region.</text>
</comment>
<keyword id="KW-0025">Alternative splicing</keyword>
<keyword id="KW-1003">Cell membrane</keyword>
<keyword id="KW-0325">Glycoprotein</keyword>
<keyword id="KW-0445">Lipid transport</keyword>
<keyword id="KW-0460">Magnesium</keyword>
<keyword id="KW-0472">Membrane</keyword>
<keyword id="KW-0479">Metal-binding</keyword>
<keyword id="KW-1185">Reference proteome</keyword>
<keyword id="KW-1278">Translocase</keyword>
<keyword id="KW-0812">Transmembrane</keyword>
<keyword id="KW-1133">Transmembrane helix</keyword>
<keyword id="KW-0813">Transport</keyword>
<sequence length="694" mass="78236">MAEKTKEETQLWNGTVLQDASSLQDSVFSSESDNSLYFTYSGQSNTLEVRDLTYQGGTCLRSWGQEDPHMSLGLSESVDMASQVPWFEQLAQFKLPWRSRGSQDSWDLGIRNLSFKVRSGQMLAIIGSAGCGRATLLDVITGRDHGGKMKSGQIWINGQPSTPQLIQKCVAHVRQQDQLLPNLTVRETLTFIAQMRLPKTFSQAQRDKRVEDVIAELRLRQCANTRVGNTYVRGVSGGERRRVSIGVQLLWNPGILILDEPTSGLDSFTAHNLVRTLSRLAKGNRLVLISLHQPRSDIFRLFDLVLLMTSGTPIYLGVAQHMVQYFTSIGYPCPRYSNPADFYVDLTSIDRRSKEQEVATMEKARLLAALFLEKVQGFDDFLWKAEAKSLDTGTYAVSQTLTQDTNCGTAAELPGMIQQFTTLIRRQISNDFRDLPTLFIHGAEACLMSLIIGFLYYGHADKPLSFMDMAALLFMIGALIPFNVILDVVSKCHSERSLLYYELEDGLYTAGPYFFAKVLGELPEHCAYVIIYGMPIYWLTNLRPGPELFLLHFMLLWLVVFCCRTMALAASAMLPTFHMSSFCCNALYNSFYLTAGFMINLNNLWIVPAWISKMSFLRWCFSGLMQIQFNGHIYTTQIGNLTFSVPGDAMVTAMDLNSHPLYAIYLIVIGISCGFLSLYYLSLKFIKQKSIQDW</sequence>
<accession>P58428</accession>
<accession>Q8CIQ5</accession>
<accession>Q923R7</accession>
<feature type="chain" id="PRO_0000093398" description="ATP-binding cassette sub-family G member 8">
    <location>
        <begin position="1"/>
        <end position="694"/>
    </location>
</feature>
<feature type="topological domain" description="Cytoplasmic" evidence="2">
    <location>
        <begin position="1"/>
        <end position="437"/>
    </location>
</feature>
<feature type="transmembrane region" description="Helical; Name=1" evidence="2">
    <location>
        <begin position="438"/>
        <end position="458"/>
    </location>
</feature>
<feature type="topological domain" description="Extracellular" evidence="2">
    <location>
        <begin position="459"/>
        <end position="468"/>
    </location>
</feature>
<feature type="transmembrane region" description="Helical; Name=2" evidence="2">
    <location>
        <begin position="469"/>
        <end position="489"/>
    </location>
</feature>
<feature type="topological domain" description="Cytoplasmic" evidence="2">
    <location>
        <begin position="490"/>
        <end position="518"/>
    </location>
</feature>
<feature type="transmembrane region" description="Helical; Name=3" evidence="2">
    <location>
        <begin position="519"/>
        <end position="539"/>
    </location>
</feature>
<feature type="topological domain" description="Extracellular" evidence="2">
    <location>
        <begin position="540"/>
        <end position="548"/>
    </location>
</feature>
<feature type="transmembrane region" description="Helical; Name=4" evidence="2">
    <location>
        <begin position="549"/>
        <end position="569"/>
    </location>
</feature>
<feature type="topological domain" description="Cytoplasmic" evidence="2">
    <location>
        <begin position="570"/>
        <end position="576"/>
    </location>
</feature>
<feature type="transmembrane region" description="Helical; Name=5" evidence="2">
    <location>
        <begin position="577"/>
        <end position="597"/>
    </location>
</feature>
<feature type="topological domain" description="Extracellular" evidence="2">
    <location>
        <begin position="598"/>
        <end position="660"/>
    </location>
</feature>
<feature type="transmembrane region" description="Helical; Name=6" evidence="2">
    <location>
        <begin position="661"/>
        <end position="681"/>
    </location>
</feature>
<feature type="topological domain" description="Cytoplasmic" evidence="2">
    <location>
        <begin position="682"/>
        <end position="694"/>
    </location>
</feature>
<feature type="domain" description="ABC transporter" evidence="4">
    <location>
        <begin position="91"/>
        <end position="335"/>
    </location>
</feature>
<feature type="domain" description="ABC transmembrane type-2">
    <location>
        <begin position="436"/>
        <end position="684"/>
    </location>
</feature>
<feature type="glycosylation site" description="N-linked (GlcNAc...) asparagine" evidence="3">
    <location>
        <position position="640"/>
    </location>
</feature>
<feature type="splice variant" id="VSP_008767" description="In isoform 1 and isoform 2." evidence="6">
    <location>
        <begin position="56"/>
        <end position="77"/>
    </location>
</feature>
<feature type="splice variant" id="VSP_000054" description="In isoform 2." evidence="6">
    <location>
        <position position="398"/>
    </location>
</feature>
<feature type="sequence conflict" description="In Ref. 3; AAK85393." evidence="7" ref="3">
    <original>EK</original>
    <variation>QT</variation>
    <location>
        <begin position="3"/>
        <end position="4"/>
    </location>
</feature>
<dbReference type="EC" id="7.6.2.-" evidence="1"/>
<dbReference type="EMBL" id="AF351785">
    <property type="protein sequence ID" value="AAK84831.2"/>
    <property type="molecule type" value="mRNA"/>
</dbReference>
<dbReference type="EMBL" id="AY145899">
    <property type="protein sequence ID" value="AAN64276.1"/>
    <property type="molecule type" value="Genomic_DNA"/>
</dbReference>
<dbReference type="EMBL" id="AF404109">
    <property type="protein sequence ID" value="AAK85393.1"/>
    <property type="molecule type" value="Genomic_DNA"/>
</dbReference>
<dbReference type="RefSeq" id="NP_569098.2">
    <molecule id="P58428-1"/>
    <property type="nucleotide sequence ID" value="NM_130414.2"/>
</dbReference>
<dbReference type="SMR" id="P58428"/>
<dbReference type="FunCoup" id="P58428">
    <property type="interactions" value="76"/>
</dbReference>
<dbReference type="STRING" id="10116.ENSRNOP00000058587"/>
<dbReference type="GlyCosmos" id="P58428">
    <property type="glycosylation" value="1 site, No reported glycans"/>
</dbReference>
<dbReference type="GlyGen" id="P58428">
    <property type="glycosylation" value="1 site"/>
</dbReference>
<dbReference type="PhosphoSitePlus" id="P58428"/>
<dbReference type="PaxDb" id="10116-ENSRNOP00000058587"/>
<dbReference type="Ensembl" id="ENSRNOT00000007638.8">
    <molecule id="P58428-1"/>
    <property type="protein sequence ID" value="ENSRNOP00000007638.6"/>
    <property type="gene ID" value="ENSRNOG00000005420.9"/>
</dbReference>
<dbReference type="Ensembl" id="ENSRNOT00000061871.6">
    <molecule id="P58428-3"/>
    <property type="protein sequence ID" value="ENSRNOP00000058587.3"/>
    <property type="gene ID" value="ENSRNOG00000005420.9"/>
</dbReference>
<dbReference type="GeneID" id="155192"/>
<dbReference type="KEGG" id="rno:155192"/>
<dbReference type="UCSC" id="RGD:620300">
    <molecule id="P58428-3"/>
    <property type="organism name" value="rat"/>
</dbReference>
<dbReference type="AGR" id="RGD:620300"/>
<dbReference type="CTD" id="64241"/>
<dbReference type="RGD" id="620300">
    <property type="gene designation" value="Abcg8"/>
</dbReference>
<dbReference type="eggNOG" id="KOG0061">
    <property type="taxonomic scope" value="Eukaryota"/>
</dbReference>
<dbReference type="GeneTree" id="ENSGT00940000159739"/>
<dbReference type="HOGENOM" id="CLU_000604_57_9_1"/>
<dbReference type="InParanoid" id="P58428"/>
<dbReference type="OMA" id="WLAWEDY"/>
<dbReference type="OrthoDB" id="66620at2759"/>
<dbReference type="PhylomeDB" id="P58428"/>
<dbReference type="Reactome" id="R-RNO-1369062">
    <property type="pathway name" value="ABC transporters in lipid homeostasis"/>
</dbReference>
<dbReference type="PRO" id="PR:P58428"/>
<dbReference type="Proteomes" id="UP000002494">
    <property type="component" value="Chromosome 6"/>
</dbReference>
<dbReference type="Bgee" id="ENSRNOG00000005420">
    <property type="expression patterns" value="Expressed in jejunum and 4 other cell types or tissues"/>
</dbReference>
<dbReference type="GO" id="GO:0016324">
    <property type="term" value="C:apical plasma membrane"/>
    <property type="evidence" value="ECO:0000250"/>
    <property type="project" value="UniProtKB"/>
</dbReference>
<dbReference type="GO" id="GO:0043190">
    <property type="term" value="C:ATP-binding cassette (ABC) transporter complex"/>
    <property type="evidence" value="ECO:0000250"/>
    <property type="project" value="UniProtKB"/>
</dbReference>
<dbReference type="GO" id="GO:0005886">
    <property type="term" value="C:plasma membrane"/>
    <property type="evidence" value="ECO:0000250"/>
    <property type="project" value="UniProtKB"/>
</dbReference>
<dbReference type="GO" id="GO:0043235">
    <property type="term" value="C:receptor complex"/>
    <property type="evidence" value="ECO:0000266"/>
    <property type="project" value="RGD"/>
</dbReference>
<dbReference type="GO" id="GO:0140359">
    <property type="term" value="F:ABC-type transporter activity"/>
    <property type="evidence" value="ECO:0007669"/>
    <property type="project" value="InterPro"/>
</dbReference>
<dbReference type="GO" id="GO:0005524">
    <property type="term" value="F:ATP binding"/>
    <property type="evidence" value="ECO:0007669"/>
    <property type="project" value="Ensembl"/>
</dbReference>
<dbReference type="GO" id="GO:0016887">
    <property type="term" value="F:ATP hydrolysis activity"/>
    <property type="evidence" value="ECO:0007669"/>
    <property type="project" value="Ensembl"/>
</dbReference>
<dbReference type="GO" id="GO:0042626">
    <property type="term" value="F:ATPase-coupled transmembrane transporter activity"/>
    <property type="evidence" value="ECO:0000250"/>
    <property type="project" value="UniProtKB"/>
</dbReference>
<dbReference type="GO" id="GO:0120020">
    <property type="term" value="F:cholesterol transfer activity"/>
    <property type="evidence" value="ECO:0007669"/>
    <property type="project" value="Ensembl"/>
</dbReference>
<dbReference type="GO" id="GO:0046872">
    <property type="term" value="F:metal ion binding"/>
    <property type="evidence" value="ECO:0007669"/>
    <property type="project" value="UniProtKB-KW"/>
</dbReference>
<dbReference type="GO" id="GO:0046982">
    <property type="term" value="F:protein heterodimerization activity"/>
    <property type="evidence" value="ECO:0000250"/>
    <property type="project" value="UniProtKB"/>
</dbReference>
<dbReference type="GO" id="GO:0033344">
    <property type="term" value="P:cholesterol efflux"/>
    <property type="evidence" value="ECO:0000266"/>
    <property type="project" value="RGD"/>
</dbReference>
<dbReference type="GO" id="GO:0042632">
    <property type="term" value="P:cholesterol homeostasis"/>
    <property type="evidence" value="ECO:0000270"/>
    <property type="project" value="RGD"/>
</dbReference>
<dbReference type="GO" id="GO:0045796">
    <property type="term" value="P:negative regulation of intestinal cholesterol absorption"/>
    <property type="evidence" value="ECO:0000266"/>
    <property type="project" value="RGD"/>
</dbReference>
<dbReference type="GO" id="GO:0010949">
    <property type="term" value="P:negative regulation of intestinal phytosterol absorption"/>
    <property type="evidence" value="ECO:0000266"/>
    <property type="project" value="RGD"/>
</dbReference>
<dbReference type="GO" id="GO:0015914">
    <property type="term" value="P:phospholipid transport"/>
    <property type="evidence" value="ECO:0000266"/>
    <property type="project" value="RGD"/>
</dbReference>
<dbReference type="GO" id="GO:0014850">
    <property type="term" value="P:response to muscle activity"/>
    <property type="evidence" value="ECO:0000270"/>
    <property type="project" value="RGD"/>
</dbReference>
<dbReference type="GO" id="GO:0007584">
    <property type="term" value="P:response to nutrient"/>
    <property type="evidence" value="ECO:0000270"/>
    <property type="project" value="RGD"/>
</dbReference>
<dbReference type="GO" id="GO:0031667">
    <property type="term" value="P:response to nutrient levels"/>
    <property type="evidence" value="ECO:0000270"/>
    <property type="project" value="RGD"/>
</dbReference>
<dbReference type="GO" id="GO:0009410">
    <property type="term" value="P:response to xenobiotic stimulus"/>
    <property type="evidence" value="ECO:0000270"/>
    <property type="project" value="RGD"/>
</dbReference>
<dbReference type="GO" id="GO:0055092">
    <property type="term" value="P:sterol homeostasis"/>
    <property type="evidence" value="ECO:0000266"/>
    <property type="project" value="RGD"/>
</dbReference>
<dbReference type="GO" id="GO:0015918">
    <property type="term" value="P:sterol transport"/>
    <property type="evidence" value="ECO:0000250"/>
    <property type="project" value="UniProtKB"/>
</dbReference>
<dbReference type="GO" id="GO:0055085">
    <property type="term" value="P:transmembrane transport"/>
    <property type="evidence" value="ECO:0000318"/>
    <property type="project" value="GO_Central"/>
</dbReference>
<dbReference type="GO" id="GO:0070328">
    <property type="term" value="P:triglyceride homeostasis"/>
    <property type="evidence" value="ECO:0000270"/>
    <property type="project" value="RGD"/>
</dbReference>
<dbReference type="CDD" id="cd03234">
    <property type="entry name" value="ABCG_White"/>
    <property type="match status" value="1"/>
</dbReference>
<dbReference type="FunFam" id="3.40.50.300:FF:000831">
    <property type="entry name" value="ATP-binding cassette sub-family G member 8"/>
    <property type="match status" value="1"/>
</dbReference>
<dbReference type="Gene3D" id="3.40.50.300">
    <property type="entry name" value="P-loop containing nucleotide triphosphate hydrolases"/>
    <property type="match status" value="1"/>
</dbReference>
<dbReference type="InterPro" id="IPR013525">
    <property type="entry name" value="ABC2_TM"/>
</dbReference>
<dbReference type="InterPro" id="IPR003439">
    <property type="entry name" value="ABC_transporter-like_ATP-bd"/>
</dbReference>
<dbReference type="InterPro" id="IPR017871">
    <property type="entry name" value="ABC_transporter-like_CS"/>
</dbReference>
<dbReference type="InterPro" id="IPR043926">
    <property type="entry name" value="ABCG_dom"/>
</dbReference>
<dbReference type="InterPro" id="IPR050352">
    <property type="entry name" value="ABCG_transporters"/>
</dbReference>
<dbReference type="InterPro" id="IPR027417">
    <property type="entry name" value="P-loop_NTPase"/>
</dbReference>
<dbReference type="PANTHER" id="PTHR48041">
    <property type="entry name" value="ABC TRANSPORTER G FAMILY MEMBER 28"/>
    <property type="match status" value="1"/>
</dbReference>
<dbReference type="PANTHER" id="PTHR48041:SF71">
    <property type="entry name" value="ATP-BINDING CASSETTE SUB-FAMILY G MEMBER 8"/>
    <property type="match status" value="1"/>
</dbReference>
<dbReference type="Pfam" id="PF01061">
    <property type="entry name" value="ABC2_membrane"/>
    <property type="match status" value="1"/>
</dbReference>
<dbReference type="Pfam" id="PF19055">
    <property type="entry name" value="ABC2_membrane_7"/>
    <property type="match status" value="1"/>
</dbReference>
<dbReference type="Pfam" id="PF00005">
    <property type="entry name" value="ABC_tran"/>
    <property type="match status" value="1"/>
</dbReference>
<dbReference type="SUPFAM" id="SSF52540">
    <property type="entry name" value="P-loop containing nucleoside triphosphate hydrolases"/>
    <property type="match status" value="1"/>
</dbReference>
<dbReference type="PROSITE" id="PS00211">
    <property type="entry name" value="ABC_TRANSPORTER_1"/>
    <property type="match status" value="1"/>
</dbReference>
<dbReference type="PROSITE" id="PS50893">
    <property type="entry name" value="ABC_TRANSPORTER_2"/>
    <property type="match status" value="1"/>
</dbReference>
<protein>
    <recommendedName>
        <fullName evidence="7">ATP-binding cassette sub-family G member 8</fullName>
        <ecNumber evidence="1">7.6.2.-</ecNumber>
    </recommendedName>
    <alternativeName>
        <fullName evidence="6">Sterolin-2</fullName>
    </alternativeName>
</protein>
<name>ABCG8_RAT</name>
<organism>
    <name type="scientific">Rattus norvegicus</name>
    <name type="common">Rat</name>
    <dbReference type="NCBI Taxonomy" id="10116"/>
    <lineage>
        <taxon>Eukaryota</taxon>
        <taxon>Metazoa</taxon>
        <taxon>Chordata</taxon>
        <taxon>Craniata</taxon>
        <taxon>Vertebrata</taxon>
        <taxon>Euteleostomi</taxon>
        <taxon>Mammalia</taxon>
        <taxon>Eutheria</taxon>
        <taxon>Euarchontoglires</taxon>
        <taxon>Glires</taxon>
        <taxon>Rodentia</taxon>
        <taxon>Myomorpha</taxon>
        <taxon>Muroidea</taxon>
        <taxon>Muridae</taxon>
        <taxon>Murinae</taxon>
        <taxon>Rattus</taxon>
    </lineage>
</organism>
<gene>
    <name evidence="8" type="primary">Abcg8</name>
</gene>
<evidence type="ECO:0000250" key="1">
    <source>
        <dbReference type="UniProtKB" id="Q9DBM0"/>
    </source>
</evidence>
<evidence type="ECO:0000250" key="2">
    <source>
        <dbReference type="UniProtKB" id="Q9H221"/>
    </source>
</evidence>
<evidence type="ECO:0000255" key="3"/>
<evidence type="ECO:0000255" key="4">
    <source>
        <dbReference type="PROSITE-ProRule" id="PRU00434"/>
    </source>
</evidence>
<evidence type="ECO:0000269" key="5">
    <source>
    </source>
</evidence>
<evidence type="ECO:0000303" key="6">
    <source>
    </source>
</evidence>
<evidence type="ECO:0000305" key="7"/>
<evidence type="ECO:0000312" key="8">
    <source>
        <dbReference type="RGD" id="620300"/>
    </source>
</evidence>